<feature type="chain" id="PRO_0000398372" description="Replicase polyprotein">
    <location>
        <begin position="1"/>
        <end position="1771"/>
    </location>
</feature>
<feature type="chain" id="PRO_0000398374" description="Protein 1A" evidence="1">
    <location>
        <begin position="1"/>
        <end position="166"/>
    </location>
</feature>
<feature type="chain" id="PRO_0000398373" description="Protein 2A" evidence="1">
    <location>
        <begin position="167"/>
        <end position="190"/>
    </location>
</feature>
<feature type="chain" id="PRO_0000398375" description="Protein 2B" evidence="1">
    <location>
        <begin position="191"/>
        <end position="328"/>
    </location>
</feature>
<feature type="chain" id="PRO_0000398376" description="Protein 2C" evidence="1">
    <location>
        <begin position="329"/>
        <end position="739"/>
    </location>
</feature>
<feature type="chain" id="PRO_0000398377" description="Protein 3A" evidence="1">
    <location>
        <begin position="740"/>
        <end status="unknown"/>
    </location>
</feature>
<feature type="chain" id="PRO_0000398378" description="Protein 3B" evidence="1">
    <location>
        <begin status="unknown"/>
        <end position="908"/>
    </location>
</feature>
<feature type="chain" id="PRO_0000398379" description="3C-like protease" evidence="1">
    <location>
        <begin position="909"/>
        <end position="1220"/>
    </location>
</feature>
<feature type="chain" id="PRO_0000398380" description="RNA-directed RNA polymerase 3D-POL" evidence="1">
    <location>
        <begin position="1221"/>
        <end position="1771"/>
    </location>
</feature>
<feature type="domain" description="SF3 helicase" evidence="3">
    <location>
        <begin position="482"/>
        <end position="656"/>
    </location>
</feature>
<feature type="domain" description="Peptidase C3" evidence="4">
    <location>
        <begin position="954"/>
        <end position="1201"/>
    </location>
</feature>
<feature type="domain" description="RdRp catalytic" evidence="2">
    <location>
        <begin position="1495"/>
        <end position="1634"/>
    </location>
</feature>
<feature type="region of interest" description="BC-box" evidence="8">
    <location>
        <begin position="16"/>
        <end position="25"/>
    </location>
</feature>
<feature type="region of interest" description="Interaction with and inhibition of host AGO2" evidence="8">
    <location>
        <begin position="106"/>
        <end position="114"/>
    </location>
</feature>
<feature type="region of interest" description="Disordered" evidence="5">
    <location>
        <begin position="919"/>
        <end position="942"/>
    </location>
</feature>
<feature type="coiled-coil region" evidence="1">
    <location>
        <begin position="1"/>
        <end position="29"/>
    </location>
</feature>
<feature type="coiled-coil region" evidence="1">
    <location>
        <begin position="1385"/>
        <end position="1413"/>
    </location>
</feature>
<feature type="active site" description="For picornain 3C-like protease activity" evidence="4">
    <location>
        <position position="1003"/>
    </location>
</feature>
<feature type="active site" description="For picornain 3C-like protease activity" evidence="4">
    <location>
        <position position="1063"/>
    </location>
</feature>
<feature type="active site" description="For picornain 3C-like protease activity" evidence="4">
    <location>
        <position position="1162"/>
    </location>
</feature>
<feature type="binding site" evidence="3">
    <location>
        <begin position="510"/>
        <end position="517"/>
    </location>
    <ligand>
        <name>ATP</name>
        <dbReference type="ChEBI" id="CHEBI:30616"/>
    </ligand>
</feature>
<feature type="site" description="Involved in the inhibition of host stress granules formation" evidence="7">
    <location>
        <position position="146"/>
    </location>
</feature>
<feature type="site" description="Cleavage; by ribosomal skip" evidence="1">
    <location>
        <begin position="166"/>
        <end position="167"/>
    </location>
</feature>
<feature type="site" description="Cleavage; by 3C-like protease" evidence="1">
    <location>
        <begin position="190"/>
        <end position="191"/>
    </location>
</feature>
<feature type="site" description="Cleavage; by 3C-like protease" evidence="1">
    <location>
        <begin position="328"/>
        <end position="329"/>
    </location>
</feature>
<feature type="site" description="Cleavage; by 3C-like protease" evidence="1">
    <location>
        <begin position="739"/>
        <end position="740"/>
    </location>
</feature>
<feature type="site" description="Cleavage; by 3C-like protease" evidence="1">
    <location>
        <begin position="884"/>
        <end position="885"/>
    </location>
</feature>
<feature type="site" description="Cleavage; by 3C-like protease" evidence="1">
    <location>
        <begin position="908"/>
        <end position="909"/>
    </location>
</feature>
<feature type="site" description="Cleavage; by 3C-like protease" evidence="1">
    <location>
        <begin position="1220"/>
        <end position="1221"/>
    </location>
</feature>
<feature type="mutagenesis site" description="Reduced host AGO2 binding, loss of AGO2 inhibition and loss of RNA silencing inhibition." evidence="8">
    <original>P</original>
    <variation>A</variation>
    <location>
        <position position="106"/>
    </location>
</feature>
<feature type="mutagenesis site" description="Reduced host AGO2 binding, loss of AGO2 inhibition and loss of RNA silencing inhibition. Loss of replication efficiency." evidence="8">
    <original>F</original>
    <variation>A</variation>
    <variation>D</variation>
    <variation>G</variation>
    <variation>N</variation>
    <variation>P</variation>
    <variation>R</variation>
    <location>
        <position position="114"/>
    </location>
</feature>
<feature type="mutagenesis site" description="Attenuated infection. Loss of inhibition of host stress granules formation." evidence="7">
    <original>R</original>
    <variation>A</variation>
    <location>
        <position position="146"/>
    </location>
</feature>
<feature type="helix" evidence="12">
    <location>
        <begin position="15"/>
        <end position="29"/>
    </location>
</feature>
<feature type="strand" evidence="12">
    <location>
        <begin position="37"/>
        <end position="43"/>
    </location>
</feature>
<feature type="turn" evidence="12">
    <location>
        <begin position="49"/>
        <end position="52"/>
    </location>
</feature>
<feature type="strand" evidence="12">
    <location>
        <begin position="55"/>
        <end position="61"/>
    </location>
</feature>
<feature type="helix" evidence="12">
    <location>
        <begin position="66"/>
        <end position="83"/>
    </location>
</feature>
<feature type="helix" evidence="12">
    <location>
        <begin position="90"/>
        <end position="103"/>
    </location>
</feature>
<feature type="turn" evidence="12">
    <location>
        <begin position="110"/>
        <end position="112"/>
    </location>
</feature>
<feature type="strand" evidence="12">
    <location>
        <begin position="117"/>
        <end position="121"/>
    </location>
</feature>
<feature type="helix" evidence="12">
    <location>
        <begin position="123"/>
        <end position="127"/>
    </location>
</feature>
<feature type="helix" evidence="12">
    <location>
        <begin position="130"/>
        <end position="136"/>
    </location>
</feature>
<feature type="helix" evidence="12">
    <location>
        <begin position="142"/>
        <end position="149"/>
    </location>
</feature>
<protein>
    <recommendedName>
        <fullName>Replicase polyprotein</fullName>
    </recommendedName>
    <component>
        <recommendedName>
            <fullName>Protein 1A</fullName>
        </recommendedName>
        <alternativeName>
            <fullName>CrPV-1A</fullName>
        </alternativeName>
    </component>
    <component>
        <recommendedName>
            <fullName>Protein 2A</fullName>
        </recommendedName>
    </component>
    <component>
        <recommendedName>
            <fullName>Protein 2B</fullName>
        </recommendedName>
    </component>
    <component>
        <recommendedName>
            <fullName>Protein 2C</fullName>
        </recommendedName>
    </component>
    <component>
        <recommendedName>
            <fullName>Protein 3A</fullName>
        </recommendedName>
    </component>
    <component>
        <recommendedName>
            <fullName>Protein 3B</fullName>
        </recommendedName>
    </component>
    <component>
        <recommendedName>
            <fullName>3C-like protease</fullName>
            <ecNumber>3.4.22.-</ecNumber>
        </recommendedName>
    </component>
    <component>
        <recommendedName>
            <fullName>RNA-directed RNA polymerase 3D-POL</fullName>
            <ecNumber>2.7.7.48</ecNumber>
        </recommendedName>
    </component>
</protein>
<accession>Q9IJX4</accession>
<organismHost>
    <name type="scientific">Teleogryllus oceanicus</name>
    <name type="common">black field cricket</name>
    <dbReference type="NCBI Taxonomy" id="128161"/>
</organismHost>
<evidence type="ECO:0000255" key="1"/>
<evidence type="ECO:0000255" key="2">
    <source>
        <dbReference type="PROSITE-ProRule" id="PRU00539"/>
    </source>
</evidence>
<evidence type="ECO:0000255" key="3">
    <source>
        <dbReference type="PROSITE-ProRule" id="PRU00551"/>
    </source>
</evidence>
<evidence type="ECO:0000255" key="4">
    <source>
        <dbReference type="PROSITE-ProRule" id="PRU01222"/>
    </source>
</evidence>
<evidence type="ECO:0000256" key="5">
    <source>
        <dbReference type="SAM" id="MobiDB-lite"/>
    </source>
</evidence>
<evidence type="ECO:0000269" key="6">
    <source>
    </source>
</evidence>
<evidence type="ECO:0000269" key="7">
    <source>
    </source>
</evidence>
<evidence type="ECO:0000269" key="8">
    <source>
    </source>
</evidence>
<evidence type="ECO:0000269" key="9">
    <source>
    </source>
</evidence>
<evidence type="ECO:0000305" key="10">
    <source>
    </source>
</evidence>
<evidence type="ECO:0007744" key="11">
    <source>
        <dbReference type="PDB" id="6C3R"/>
    </source>
</evidence>
<evidence type="ECO:0007829" key="12">
    <source>
        <dbReference type="PDB" id="6C3R"/>
    </source>
</evidence>
<organism>
    <name type="scientific">Cricket paralysis virus (isolate Teleogryllus commodus/Australia/CrPVVIC/1968)</name>
    <name type="common">CrPV</name>
    <dbReference type="NCBI Taxonomy" id="928300"/>
    <lineage>
        <taxon>Viruses</taxon>
        <taxon>Riboviria</taxon>
        <taxon>Orthornavirae</taxon>
        <taxon>Pisuviricota</taxon>
        <taxon>Pisoniviricetes</taxon>
        <taxon>Picornavirales</taxon>
        <taxon>Dicistroviridae</taxon>
        <taxon>Cripavirus</taxon>
        <taxon>Cripavirus grylli</taxon>
    </lineage>
</organism>
<reference key="1">
    <citation type="journal article" date="2000" name="Mol. Cell. Biol.">
        <title>Naturally occurring dicistronic cricket paralysis virus RNA is regulated by two internal ribosome entry sites.</title>
        <authorList>
            <person name="Wilson J.E."/>
            <person name="Powell M.J."/>
            <person name="Hoover S.E."/>
            <person name="Sarnow P."/>
        </authorList>
    </citation>
    <scope>NUCLEOTIDE SEQUENCE [GENOMIC RNA]</scope>
</reference>
<reference key="2">
    <citation type="journal article" date="2008" name="Arch. Virol.">
        <title>Cleavage sites of the 'P3 region' in the nonstructural polyprotein precursor of a dicistrovirus.</title>
        <authorList>
            <person name="Nakashima N."/>
            <person name="Nakamura Y."/>
        </authorList>
    </citation>
    <scope>PROTEOLYTIC PROCESSING OF POLYPROTEIN</scope>
</reference>
<reference key="3">
    <citation type="journal article" date="2010" name="Nat. Struct. Mol. Biol.">
        <title>Cricket paralysis virus antagonizes Argonaute 2 to modulate antiviral defense in Drosophila.</title>
        <authorList>
            <person name="Nayak A."/>
            <person name="Berry B."/>
            <person name="Tassetto M."/>
            <person name="Kunitomi M."/>
            <person name="Acevedo A."/>
            <person name="Deng C."/>
            <person name="Krutchinsky A."/>
            <person name="Gross J."/>
            <person name="Antoniewski C."/>
            <person name="Andino R."/>
        </authorList>
    </citation>
    <scope>FUNCTION (PROTEIN 1A)</scope>
    <scope>INTERACTION WITH HOST AGO2 (PROTEIN 1A)</scope>
</reference>
<reference key="4">
    <citation type="journal article" date="2017" name="J. Virol.">
        <title>Disruption of Stress Granule Formation by the Multifunctional Cricket Paralysis Virus 1A Protein.</title>
        <authorList>
            <person name="Khong A."/>
            <person name="Kerr C.H."/>
            <person name="Yeung C.H.L."/>
            <person name="Keatings K."/>
            <person name="Nayak A."/>
            <person name="Allan D.W."/>
            <person name="Jan E."/>
        </authorList>
    </citation>
    <scope>FUNCTION</scope>
    <scope>SUBCELLULAR LOCATION</scope>
    <scope>MUTAGENESIS OF ARG-146</scope>
</reference>
<reference key="5">
    <citation type="journal article" date="2022" name="PLoS Pathog.">
        <title>Targeting Nup358/RanBP2 by a viral protein disrupts stress granule formation.</title>
        <authorList>
            <person name="Sadasivan J."/>
            <person name="Vlok M."/>
            <person name="Wang X."/>
            <person name="Nayak A."/>
            <person name="Andino R."/>
            <person name="Jan E."/>
        </authorList>
    </citation>
    <scope>FUNCTION</scope>
</reference>
<reference evidence="11" key="6">
    <citation type="journal article" date="2018" name="Cell Host Microbe">
        <title>A Viral Protein Restricts Drosophila RNAi Immunity by Regulating Argonaute Activity and Stability.</title>
        <authorList>
            <person name="Nayak A."/>
            <person name="Kim D.Y."/>
            <person name="Trnka M.J."/>
            <person name="Kerr C.H."/>
            <person name="Lidsky P.V."/>
            <person name="Stanley D.J."/>
            <person name="Rivera B.M."/>
            <person name="Li K.H."/>
            <person name="Burlingame A.L."/>
            <person name="Jan E."/>
            <person name="Frydman J."/>
            <person name="Gross J.D."/>
            <person name="Andino R."/>
        </authorList>
    </citation>
    <scope>X-RAY CRYSTALLOGRAPHY (2.60 ANGSTROMS) OF 14-154</scope>
    <scope>INTERACTION WITH HOST AGO2</scope>
    <scope>MUTAGENESIS OF PRO-106 AND PHE-114</scope>
    <scope>DOMAIN</scope>
</reference>
<sequence length="1771" mass="203830">MSFQQTNNNATNNINSLEELAAQELIAAQFEGNLDGFFCTFYVQSKPQLLDLESECYCMDDFDCGCDRIKREEELRKLIFLTSDVYGYNFEEWKGLVWKFVQNYCPEHRYGSTFGNGLLIVSPRFFMDHLDWFQQWKLVSSNDECRAFLRKRTQLLMSGDVESNPGPVQSRPVYACDNDPRAIRLEKALQRRDEKISTLIKKLRQEIKNNRIYTQGFFDDLKGAKGEVGQLNGNLTRICDFLENSLPTLTAQIQTTVLTTTDKYVNLKEDLLKVAILLVLVRLLMVWKKYRAALIVIILFVMHFYGFDKQILDIVLDLKDKILQTTTQAGTETLEEVVYHPWFDTCGKLIFAVLAFFAIKKIPGKQDWDNYISRLDRIPKAIEGSKKIVDYCSEYFNLSVDEVKKVVLGKELKGTQGLYDEIHVWAKEIRHYLDLDERNKITLDTETAAKVEDLYKRGLKYSEEKIPDRDIARFITTMLFPAKSLYEQVLLSPVKGGGPKMRPITVWLTGESGIGKTQMIYPLCIDILREMGIVKPDAYKHQAYARQVETEYWDGYNGQKIVIYDDAFQLKDDKTKPNPEIFEVIRTCNTFPQHLHMAALQDKNMYSQAEVLLYTTNQFQVQLESITFPDAFYNRMKTHAYRVQIKQEKSIWVRNARGEEYNALDVTKLNKDEAIDLSVYEFQKMRFDDESATKWIDDGEPISYDEFARTICKAWKEEKEKTFHQLQWLEAYASRTVAQGGSETSEYYDVWDETYFSNLLSQGFMAGKSLIEMEAEFASDAETFNAYIEYKKNIPKETKWSKWMTILDEQISALSTKIRELKNKAYKFISEHPYLTALGFIGVMISAFAMYSFFERTLTDDTITSEVGSSGDNKTQKISKRVVEVGGSGDVKTTKPAKTAVEVGSSGDSKTMKNKITKVEVGSSGDSKTQKQRNTKVEVGKELEKEAETQGCSDPAAHALVLDVLQKNTYCLYYERMVKGEMKRYRLATATFLRGWVCMMPYHFIETLYARKVAPSTNIYFSQPNCDDVIVVPVSHFIAPNAERVELTTACTRIHYKDETPRDCVLVNLHRRMCHPHRDILKHFVKKSDQGNLRGVFQGTLATFHQSANELCRAYQWLQAIRPLDQEITIYHEDTDMFDYESESYTQRDCYEYNAPTQTGNCGSIVGLYNKRMERKLIGMHIPGNVSECHGYACPLTQEAIMDGLNRLEKLDPVNNITVQCCFEPPSDIKDTMSGETPEGKFCAIGKSNIKVGQAVKTTLLKSCIYGMLSKPITKPAHLTRTRLPNGEIVDPLMKGLKKCGVDTAVLDAEIVESAALDVKQVVLTQYNSMLDVNKYRRFLTYEEATQGTGDDDFMKGIARQTSPGYRYFQMPRKLPGKQDWMGSGEQYDFTSQRAQELRRDVEELIDNCAKGIIKDVVFVDTLKDERRPIEKVDAGKTRVFSAGPQHFVVAFRKYFLPFAAYLMNNRIDNEIAVGTNVYSTDWERIAKRLKKHGNKVIAGDFGNFDGSLVAQFFGQSCGKSFYPWFKTFNDVNTEDGKRNLMICIGLWTHIVHSVHSYGDNVYMWTHSQPSGNPFTVIINCLYNSMIMRIVWILLARKLAPEMQSMKKFRENVSMISYGDDNCLNISDRVVEWFNQITISEQMKEIKHEYTDEGKTGDMVKFPSLSEIHFLKKRFVFSHQLQRTVAPLQKDVIYEMLNWTRNTIDPNEILMMNINTAFREIVYHGKSEYQKLRSGIEDLAMKGILPQQPQILTFKAYLWDATMLADEVYDF</sequence>
<proteinExistence type="evidence at protein level"/>
<keyword id="KW-0002">3D-structure</keyword>
<keyword id="KW-0067">ATP-binding</keyword>
<keyword id="KW-0175">Coiled coil</keyword>
<keyword id="KW-0347">Helicase</keyword>
<keyword id="KW-1035">Host cytoplasm</keyword>
<keyword id="KW-0945">Host-virus interaction</keyword>
<keyword id="KW-0378">Hydrolase</keyword>
<keyword id="KW-1090">Inhibition of host innate immune response by virus</keyword>
<keyword id="KW-0547">Nucleotide-binding</keyword>
<keyword id="KW-0548">Nucleotidyltransferase</keyword>
<keyword id="KW-0645">Protease</keyword>
<keyword id="KW-1185">Reference proteome</keyword>
<keyword id="KW-0694">RNA-binding</keyword>
<keyword id="KW-0696">RNA-directed RNA polymerase</keyword>
<keyword id="KW-0941">Suppressor of RNA silencing</keyword>
<keyword id="KW-0788">Thiol protease</keyword>
<keyword id="KW-0808">Transferase</keyword>
<keyword id="KW-0899">Viral immunoevasion</keyword>
<keyword id="KW-0693">Viral RNA replication</keyword>
<name>POLN_CRPVC</name>
<comment type="function">
    <molecule>Protein 1A</molecule>
    <text evidence="6 7 8 9">Suppressor of RNA-mediated gene silencing, an antiviral defense mechanism of insect cells (PubMed:20400949). Inhibits siRNA function through the direct enzymatic inactivation of host AGO2, but does not interfere with miRNA pathway (PubMed:20400949). Facilitates viral replication via the recruitment of a cellular ubiquitin ligase complex that promotes host AGO2 degradation (PubMed:30308158). Inhibits the integrated stress response (ISR) in the infected cell possiby by degrading host Nup358 (PubMed:28003491, PubMed:36455064). Stress granule formation is thus inhibited, which allows protein synthesis and viral replication (PubMed:28003491, PubMed:36455064). Does not bind to dsRNA or siRNA (PubMed:20400949).</text>
</comment>
<comment type="function">
    <molecule>RNA-directed RNA polymerase 3D-POL</molecule>
    <text evidence="2 6">Replicates the genomic and antigenomic RNA.</text>
</comment>
<comment type="catalytic activity">
    <molecule>RNA-directed RNA polymerase 3D-POL</molecule>
    <reaction evidence="2">
        <text>RNA(n) + a ribonucleoside 5'-triphosphate = RNA(n+1) + diphosphate</text>
        <dbReference type="Rhea" id="RHEA:21248"/>
        <dbReference type="Rhea" id="RHEA-COMP:14527"/>
        <dbReference type="Rhea" id="RHEA-COMP:17342"/>
        <dbReference type="ChEBI" id="CHEBI:33019"/>
        <dbReference type="ChEBI" id="CHEBI:61557"/>
        <dbReference type="ChEBI" id="CHEBI:140395"/>
        <dbReference type="EC" id="2.7.7.48"/>
    </reaction>
</comment>
<comment type="subunit">
    <molecule>Protein 1A</molecule>
    <text evidence="6 10">Interacts with host AGO2; this interaction leads to AGO2 degradation via an E3 ubiquitin ligase-dependent pathway and may block the RNA-induced silencing complexes (RISC) activity.</text>
</comment>
<comment type="interaction">
    <interactant intactId="EBI-15848754">
        <id>Q9IJX4</id>
    </interactant>
    <interactant intactId="EBI-442476">
        <id>Q9VUQ5</id>
        <label>AGO2</label>
    </interactant>
    <organismsDiffer>true</organismsDiffer>
    <experiments>3</experiments>
</comment>
<comment type="subcellular location">
    <subcellularLocation>
        <location evidence="7">Host cytoplasm</location>
        <location evidence="7">Host perinuclear region</location>
    </subcellularLocation>
</comment>
<comment type="domain">
    <text evidence="8">The BC-box mediates viral E3 ligase assembly in order to degrade host AGO2.</text>
</comment>
<comment type="PTM">
    <molecule>Protein 1A</molecule>
    <text>Might be expressed through a ribosomal skip from one codon to the next without formation of a peptide bond.</text>
</comment>
<gene>
    <name type="ORF">ORF1</name>
</gene>
<dbReference type="EC" id="3.4.22.-"/>
<dbReference type="EC" id="2.7.7.48"/>
<dbReference type="EMBL" id="AF218039">
    <property type="protein sequence ID" value="AAF80998.1"/>
    <property type="molecule type" value="Genomic_RNA"/>
</dbReference>
<dbReference type="RefSeq" id="NP_647481.1">
    <property type="nucleotide sequence ID" value="NC_003924.1"/>
</dbReference>
<dbReference type="PDB" id="6C3R">
    <property type="method" value="X-ray"/>
    <property type="resolution" value="2.60 A"/>
    <property type="chains" value="A/B=14-154"/>
</dbReference>
<dbReference type="PDBsum" id="6C3R"/>
<dbReference type="SMR" id="Q9IJX4"/>
<dbReference type="DIP" id="DIP-59000N"/>
<dbReference type="IntAct" id="Q9IJX4">
    <property type="interactions" value="1"/>
</dbReference>
<dbReference type="MEROPS" id="C03.015"/>
<dbReference type="KEGG" id="vg:944541"/>
<dbReference type="Proteomes" id="UP000008590">
    <property type="component" value="Segment"/>
</dbReference>
<dbReference type="GO" id="GO:0031462">
    <property type="term" value="C:Cul2-RING ubiquitin ligase complex"/>
    <property type="evidence" value="ECO:0000353"/>
    <property type="project" value="FlyBase"/>
</dbReference>
<dbReference type="GO" id="GO:0044220">
    <property type="term" value="C:host cell perinuclear region of cytoplasm"/>
    <property type="evidence" value="ECO:0007669"/>
    <property type="project" value="UniProtKB-SubCell"/>
</dbReference>
<dbReference type="GO" id="GO:0005524">
    <property type="term" value="F:ATP binding"/>
    <property type="evidence" value="ECO:0007669"/>
    <property type="project" value="UniProtKB-KW"/>
</dbReference>
<dbReference type="GO" id="GO:0004197">
    <property type="term" value="F:cysteine-type endopeptidase activity"/>
    <property type="evidence" value="ECO:0007669"/>
    <property type="project" value="InterPro"/>
</dbReference>
<dbReference type="GO" id="GO:0060698">
    <property type="term" value="F:endoribonuclease inhibitor activity"/>
    <property type="evidence" value="ECO:0000314"/>
    <property type="project" value="FlyBase"/>
</dbReference>
<dbReference type="GO" id="GO:0003723">
    <property type="term" value="F:RNA binding"/>
    <property type="evidence" value="ECO:0007669"/>
    <property type="project" value="UniProtKB-KW"/>
</dbReference>
<dbReference type="GO" id="GO:0003724">
    <property type="term" value="F:RNA helicase activity"/>
    <property type="evidence" value="ECO:0007669"/>
    <property type="project" value="InterPro"/>
</dbReference>
<dbReference type="GO" id="GO:0003968">
    <property type="term" value="F:RNA-directed RNA polymerase activity"/>
    <property type="evidence" value="ECO:0007669"/>
    <property type="project" value="UniProtKB-KW"/>
</dbReference>
<dbReference type="GO" id="GO:0006351">
    <property type="term" value="P:DNA-templated transcription"/>
    <property type="evidence" value="ECO:0007669"/>
    <property type="project" value="InterPro"/>
</dbReference>
<dbReference type="GO" id="GO:0032436">
    <property type="term" value="P:positive regulation of proteasomal ubiquitin-dependent protein catabolic process"/>
    <property type="evidence" value="ECO:0000315"/>
    <property type="project" value="FlyBase"/>
</dbReference>
<dbReference type="GO" id="GO:0016567">
    <property type="term" value="P:protein ubiquitination"/>
    <property type="evidence" value="ECO:0000314"/>
    <property type="project" value="FlyBase"/>
</dbReference>
<dbReference type="GO" id="GO:0006508">
    <property type="term" value="P:proteolysis"/>
    <property type="evidence" value="ECO:0007669"/>
    <property type="project" value="UniProtKB-KW"/>
</dbReference>
<dbReference type="GO" id="GO:0140533">
    <property type="term" value="P:symbiont-mediated suppression of host RNAi-mediated antiviral immune response"/>
    <property type="evidence" value="ECO:0000316"/>
    <property type="project" value="FlyBase"/>
</dbReference>
<dbReference type="GO" id="GO:0039694">
    <property type="term" value="P:viral RNA genome replication"/>
    <property type="evidence" value="ECO:0007669"/>
    <property type="project" value="InterPro"/>
</dbReference>
<dbReference type="CDD" id="cd23194">
    <property type="entry name" value="Dicistroviridae_RdRp"/>
    <property type="match status" value="1"/>
</dbReference>
<dbReference type="Gene3D" id="1.20.960.20">
    <property type="match status" value="1"/>
</dbReference>
<dbReference type="Gene3D" id="3.30.70.270">
    <property type="match status" value="1"/>
</dbReference>
<dbReference type="Gene3D" id="2.40.10.10">
    <property type="entry name" value="Trypsin-like serine proteases"/>
    <property type="match status" value="1"/>
</dbReference>
<dbReference type="InterPro" id="IPR043502">
    <property type="entry name" value="DNA/RNA_pol_sf"/>
</dbReference>
<dbReference type="InterPro" id="IPR004004">
    <property type="entry name" value="Helic/Pol/Pept_Calicivir-typ"/>
</dbReference>
<dbReference type="InterPro" id="IPR000605">
    <property type="entry name" value="Helicase_SF3_ssDNA/RNA_vir"/>
</dbReference>
<dbReference type="InterPro" id="IPR014759">
    <property type="entry name" value="Helicase_SF3_ssRNA_vir"/>
</dbReference>
<dbReference type="InterPro" id="IPR044067">
    <property type="entry name" value="PCV_3C_PRO"/>
</dbReference>
<dbReference type="InterPro" id="IPR024387">
    <property type="entry name" value="Pept_C3G_Picornavir"/>
</dbReference>
<dbReference type="InterPro" id="IPR009003">
    <property type="entry name" value="Peptidase_S1_PA"/>
</dbReference>
<dbReference type="InterPro" id="IPR043504">
    <property type="entry name" value="Peptidase_S1_PA_chymotrypsin"/>
</dbReference>
<dbReference type="InterPro" id="IPR043128">
    <property type="entry name" value="Rev_trsase/Diguanyl_cyclase"/>
</dbReference>
<dbReference type="InterPro" id="IPR001205">
    <property type="entry name" value="RNA-dir_pol_C"/>
</dbReference>
<dbReference type="InterPro" id="IPR007094">
    <property type="entry name" value="RNA-dir_pol_PSvirus"/>
</dbReference>
<dbReference type="Pfam" id="PF12381">
    <property type="entry name" value="Peptidase_C3G"/>
    <property type="match status" value="1"/>
</dbReference>
<dbReference type="Pfam" id="PF00680">
    <property type="entry name" value="RdRP_1"/>
    <property type="match status" value="1"/>
</dbReference>
<dbReference type="Pfam" id="PF00910">
    <property type="entry name" value="RNA_helicase"/>
    <property type="match status" value="1"/>
</dbReference>
<dbReference type="PRINTS" id="PR00918">
    <property type="entry name" value="CALICVIRUSNS"/>
</dbReference>
<dbReference type="SUPFAM" id="SSF56672">
    <property type="entry name" value="DNA/RNA polymerases"/>
    <property type="match status" value="1"/>
</dbReference>
<dbReference type="SUPFAM" id="SSF50494">
    <property type="entry name" value="Trypsin-like serine proteases"/>
    <property type="match status" value="1"/>
</dbReference>
<dbReference type="PROSITE" id="PS51874">
    <property type="entry name" value="PCV_3C_PRO"/>
    <property type="match status" value="1"/>
</dbReference>
<dbReference type="PROSITE" id="PS50507">
    <property type="entry name" value="RDRP_SSRNA_POS"/>
    <property type="match status" value="1"/>
</dbReference>
<dbReference type="PROSITE" id="PS51218">
    <property type="entry name" value="SF3_HELICASE_2"/>
    <property type="match status" value="1"/>
</dbReference>